<sequence length="105" mass="11410">MNAPLRGQVYRCDLGYGAKPWLIVSNNARNRHTADVVAVRLTTTRRTIPTWVAMGPSDPLTGYVNADNIETLGKDELGDYLGEVTPATMNKINTALATALGLPWP</sequence>
<evidence type="ECO:0000250" key="1">
    <source>
        <dbReference type="UniProtKB" id="P9WII5"/>
    </source>
</evidence>
<evidence type="ECO:0000305" key="2"/>
<name>MAZF1_MYCBO</name>
<organism>
    <name type="scientific">Mycobacterium bovis (strain ATCC BAA-935 / AF2122/97)</name>
    <dbReference type="NCBI Taxonomy" id="233413"/>
    <lineage>
        <taxon>Bacteria</taxon>
        <taxon>Bacillati</taxon>
        <taxon>Actinomycetota</taxon>
        <taxon>Actinomycetes</taxon>
        <taxon>Mycobacteriales</taxon>
        <taxon>Mycobacteriaceae</taxon>
        <taxon>Mycobacterium</taxon>
        <taxon>Mycobacterium tuberculosis complex</taxon>
    </lineage>
</organism>
<comment type="function">
    <text evidence="1">Toxic component of a type II toxin-antitoxin (TA) system. Acts as an endoribonuclease on single-strand RNA, cleaving between the first and second bases in the sequence UCGCU. Neutralized by coexpression with cognate antitoxin MazE1.</text>
</comment>
<comment type="subunit">
    <text evidence="1">Forms a complex with cognate antitoxin MazE1.</text>
</comment>
<comment type="similarity">
    <text evidence="2">Belongs to the PemK/MazF family.</text>
</comment>
<reference key="1">
    <citation type="journal article" date="2003" name="Proc. Natl. Acad. Sci. U.S.A.">
        <title>The complete genome sequence of Mycobacterium bovis.</title>
        <authorList>
            <person name="Garnier T."/>
            <person name="Eiglmeier K."/>
            <person name="Camus J.-C."/>
            <person name="Medina N."/>
            <person name="Mansoor H."/>
            <person name="Pryor M."/>
            <person name="Duthoy S."/>
            <person name="Grondin S."/>
            <person name="Lacroix C."/>
            <person name="Monsempe C."/>
            <person name="Simon S."/>
            <person name="Harris B."/>
            <person name="Atkin R."/>
            <person name="Doggett J."/>
            <person name="Mayes R."/>
            <person name="Keating L."/>
            <person name="Wheeler P.R."/>
            <person name="Parkhill J."/>
            <person name="Barrell B.G."/>
            <person name="Cole S.T."/>
            <person name="Gordon S.V."/>
            <person name="Hewinson R.G."/>
        </authorList>
    </citation>
    <scope>NUCLEOTIDE SEQUENCE [LARGE SCALE GENOMIC DNA]</scope>
    <source>
        <strain>ATCC BAA-935 / AF2122/97</strain>
    </source>
</reference>
<reference key="2">
    <citation type="journal article" date="2017" name="Genome Announc.">
        <title>Updated reference genome sequence and annotation of Mycobacterium bovis AF2122/97.</title>
        <authorList>
            <person name="Malone K.M."/>
            <person name="Farrell D."/>
            <person name="Stuber T.P."/>
            <person name="Schubert O.T."/>
            <person name="Aebersold R."/>
            <person name="Robbe-Austerman S."/>
            <person name="Gordon S.V."/>
        </authorList>
    </citation>
    <scope>NUCLEOTIDE SEQUENCE [LARGE SCALE GENOMIC DNA]</scope>
    <scope>GENOME REANNOTATION</scope>
    <source>
        <strain>ATCC BAA-935 / AF2122/97</strain>
    </source>
</reference>
<gene>
    <name type="primary">mazF1</name>
    <name type="ordered locus">BQ2027_MB1532</name>
</gene>
<feature type="chain" id="PRO_0000201903" description="Endoribonuclease MazF1">
    <location>
        <begin position="1"/>
        <end position="105"/>
    </location>
</feature>
<accession>P64860</accession>
<accession>A0A1R3XYI1</accession>
<accession>P71776</accession>
<accession>X2BIK0</accession>
<keyword id="KW-0255">Endonuclease</keyword>
<keyword id="KW-0378">Hydrolase</keyword>
<keyword id="KW-0540">Nuclease</keyword>
<keyword id="KW-1185">Reference proteome</keyword>
<keyword id="KW-1277">Toxin-antitoxin system</keyword>
<proteinExistence type="inferred from homology"/>
<dbReference type="EC" id="3.1.-.-"/>
<dbReference type="EMBL" id="LT708304">
    <property type="protein sequence ID" value="SIU00135.1"/>
    <property type="molecule type" value="Genomic_DNA"/>
</dbReference>
<dbReference type="RefSeq" id="NP_855184.1">
    <property type="nucleotide sequence ID" value="NC_002945.3"/>
</dbReference>
<dbReference type="SMR" id="P64860"/>
<dbReference type="KEGG" id="mbo:BQ2027_MB1532"/>
<dbReference type="PATRIC" id="fig|233413.5.peg.1674"/>
<dbReference type="Proteomes" id="UP000001419">
    <property type="component" value="Chromosome"/>
</dbReference>
<dbReference type="GO" id="GO:0003677">
    <property type="term" value="F:DNA binding"/>
    <property type="evidence" value="ECO:0007669"/>
    <property type="project" value="InterPro"/>
</dbReference>
<dbReference type="GO" id="GO:0004521">
    <property type="term" value="F:RNA endonuclease activity"/>
    <property type="evidence" value="ECO:0007669"/>
    <property type="project" value="TreeGrafter"/>
</dbReference>
<dbReference type="GO" id="GO:0006402">
    <property type="term" value="P:mRNA catabolic process"/>
    <property type="evidence" value="ECO:0007669"/>
    <property type="project" value="TreeGrafter"/>
</dbReference>
<dbReference type="GO" id="GO:0016075">
    <property type="term" value="P:rRNA catabolic process"/>
    <property type="evidence" value="ECO:0007669"/>
    <property type="project" value="TreeGrafter"/>
</dbReference>
<dbReference type="Gene3D" id="2.30.30.110">
    <property type="match status" value="1"/>
</dbReference>
<dbReference type="InterPro" id="IPR003477">
    <property type="entry name" value="PemK-like"/>
</dbReference>
<dbReference type="InterPro" id="IPR011067">
    <property type="entry name" value="Plasmid_toxin/cell-grow_inhib"/>
</dbReference>
<dbReference type="PANTHER" id="PTHR33988:SF2">
    <property type="entry name" value="ENDORIBONUCLEASE MAZF"/>
    <property type="match status" value="1"/>
</dbReference>
<dbReference type="PANTHER" id="PTHR33988">
    <property type="entry name" value="ENDORIBONUCLEASE MAZF-RELATED"/>
    <property type="match status" value="1"/>
</dbReference>
<dbReference type="Pfam" id="PF02452">
    <property type="entry name" value="PemK_toxin"/>
    <property type="match status" value="1"/>
</dbReference>
<dbReference type="SUPFAM" id="SSF50118">
    <property type="entry name" value="Cell growth inhibitor/plasmid maintenance toxic component"/>
    <property type="match status" value="1"/>
</dbReference>
<protein>
    <recommendedName>
        <fullName evidence="2">Endoribonuclease MazF1</fullName>
        <ecNumber>3.1.-.-</ecNumber>
    </recommendedName>
    <alternativeName>
        <fullName>Toxin MazF1</fullName>
    </alternativeName>
    <alternativeName>
        <fullName>mRNA interferase MazF1</fullName>
    </alternativeName>
</protein>